<reference key="1">
    <citation type="submission" date="2009-07" db="EMBL/GenBank/DDBJ databases">
        <title>Complete sequence of Geobacter sp. M21.</title>
        <authorList>
            <consortium name="US DOE Joint Genome Institute"/>
            <person name="Lucas S."/>
            <person name="Copeland A."/>
            <person name="Lapidus A."/>
            <person name="Glavina del Rio T."/>
            <person name="Dalin E."/>
            <person name="Tice H."/>
            <person name="Bruce D."/>
            <person name="Goodwin L."/>
            <person name="Pitluck S."/>
            <person name="Saunders E."/>
            <person name="Brettin T."/>
            <person name="Detter J.C."/>
            <person name="Han C."/>
            <person name="Larimer F."/>
            <person name="Land M."/>
            <person name="Hauser L."/>
            <person name="Kyrpides N."/>
            <person name="Ovchinnikova G."/>
            <person name="Lovley D."/>
        </authorList>
    </citation>
    <scope>NUCLEOTIDE SEQUENCE [LARGE SCALE GENOMIC DNA]</scope>
    <source>
        <strain>M21</strain>
    </source>
</reference>
<evidence type="ECO:0000255" key="1">
    <source>
        <dbReference type="HAMAP-Rule" id="MF_00412"/>
    </source>
</evidence>
<accession>C6E7L9</accession>
<feature type="chain" id="PRO_1000205997" description="Gamma-glutamyl phosphate reductase">
    <location>
        <begin position="1"/>
        <end position="418"/>
    </location>
</feature>
<organism>
    <name type="scientific">Geobacter sp. (strain M21)</name>
    <dbReference type="NCBI Taxonomy" id="443144"/>
    <lineage>
        <taxon>Bacteria</taxon>
        <taxon>Pseudomonadati</taxon>
        <taxon>Thermodesulfobacteriota</taxon>
        <taxon>Desulfuromonadia</taxon>
        <taxon>Geobacterales</taxon>
        <taxon>Geobacteraceae</taxon>
        <taxon>Geobacter</taxon>
    </lineage>
</organism>
<comment type="function">
    <text evidence="1">Catalyzes the NADPH-dependent reduction of L-glutamate 5-phosphate into L-glutamate 5-semialdehyde and phosphate. The product spontaneously undergoes cyclization to form 1-pyrroline-5-carboxylate.</text>
</comment>
<comment type="catalytic activity">
    <reaction evidence="1">
        <text>L-glutamate 5-semialdehyde + phosphate + NADP(+) = L-glutamyl 5-phosphate + NADPH + H(+)</text>
        <dbReference type="Rhea" id="RHEA:19541"/>
        <dbReference type="ChEBI" id="CHEBI:15378"/>
        <dbReference type="ChEBI" id="CHEBI:43474"/>
        <dbReference type="ChEBI" id="CHEBI:57783"/>
        <dbReference type="ChEBI" id="CHEBI:58066"/>
        <dbReference type="ChEBI" id="CHEBI:58274"/>
        <dbReference type="ChEBI" id="CHEBI:58349"/>
        <dbReference type="EC" id="1.2.1.41"/>
    </reaction>
</comment>
<comment type="pathway">
    <text evidence="1">Amino-acid biosynthesis; L-proline biosynthesis; L-glutamate 5-semialdehyde from L-glutamate: step 2/2.</text>
</comment>
<comment type="subcellular location">
    <subcellularLocation>
        <location evidence="1">Cytoplasm</location>
    </subcellularLocation>
</comment>
<comment type="similarity">
    <text evidence="1">Belongs to the gamma-glutamyl phosphate reductase family.</text>
</comment>
<keyword id="KW-0028">Amino-acid biosynthesis</keyword>
<keyword id="KW-0963">Cytoplasm</keyword>
<keyword id="KW-0521">NADP</keyword>
<keyword id="KW-0560">Oxidoreductase</keyword>
<keyword id="KW-0641">Proline biosynthesis</keyword>
<gene>
    <name evidence="1" type="primary">proA</name>
    <name type="ordered locus">GM21_3862</name>
</gene>
<dbReference type="EC" id="1.2.1.41" evidence="1"/>
<dbReference type="EMBL" id="CP001661">
    <property type="protein sequence ID" value="ACT19879.1"/>
    <property type="molecule type" value="Genomic_DNA"/>
</dbReference>
<dbReference type="SMR" id="C6E7L9"/>
<dbReference type="STRING" id="443144.GM21_3862"/>
<dbReference type="KEGG" id="gem:GM21_3862"/>
<dbReference type="eggNOG" id="COG0014">
    <property type="taxonomic scope" value="Bacteria"/>
</dbReference>
<dbReference type="HOGENOM" id="CLU_030231_0_0_7"/>
<dbReference type="OrthoDB" id="9809970at2"/>
<dbReference type="UniPathway" id="UPA00098">
    <property type="reaction ID" value="UER00360"/>
</dbReference>
<dbReference type="GO" id="GO:0005737">
    <property type="term" value="C:cytoplasm"/>
    <property type="evidence" value="ECO:0007669"/>
    <property type="project" value="UniProtKB-SubCell"/>
</dbReference>
<dbReference type="GO" id="GO:0004350">
    <property type="term" value="F:glutamate-5-semialdehyde dehydrogenase activity"/>
    <property type="evidence" value="ECO:0007669"/>
    <property type="project" value="UniProtKB-UniRule"/>
</dbReference>
<dbReference type="GO" id="GO:0050661">
    <property type="term" value="F:NADP binding"/>
    <property type="evidence" value="ECO:0007669"/>
    <property type="project" value="InterPro"/>
</dbReference>
<dbReference type="GO" id="GO:0055129">
    <property type="term" value="P:L-proline biosynthetic process"/>
    <property type="evidence" value="ECO:0007669"/>
    <property type="project" value="UniProtKB-UniRule"/>
</dbReference>
<dbReference type="CDD" id="cd07079">
    <property type="entry name" value="ALDH_F18-19_ProA-GPR"/>
    <property type="match status" value="1"/>
</dbReference>
<dbReference type="FunFam" id="3.40.309.10:FF:000006">
    <property type="entry name" value="Gamma-glutamyl phosphate reductase"/>
    <property type="match status" value="1"/>
</dbReference>
<dbReference type="Gene3D" id="3.40.605.10">
    <property type="entry name" value="Aldehyde Dehydrogenase, Chain A, domain 1"/>
    <property type="match status" value="1"/>
</dbReference>
<dbReference type="Gene3D" id="3.40.309.10">
    <property type="entry name" value="Aldehyde Dehydrogenase, Chain A, domain 2"/>
    <property type="match status" value="1"/>
</dbReference>
<dbReference type="HAMAP" id="MF_00412">
    <property type="entry name" value="ProA"/>
    <property type="match status" value="1"/>
</dbReference>
<dbReference type="InterPro" id="IPR016161">
    <property type="entry name" value="Ald_DH/histidinol_DH"/>
</dbReference>
<dbReference type="InterPro" id="IPR016163">
    <property type="entry name" value="Ald_DH_C"/>
</dbReference>
<dbReference type="InterPro" id="IPR016162">
    <property type="entry name" value="Ald_DH_N"/>
</dbReference>
<dbReference type="InterPro" id="IPR015590">
    <property type="entry name" value="Aldehyde_DH_dom"/>
</dbReference>
<dbReference type="InterPro" id="IPR020593">
    <property type="entry name" value="G-glutamylP_reductase_CS"/>
</dbReference>
<dbReference type="InterPro" id="IPR012134">
    <property type="entry name" value="Glu-5-SA_DH"/>
</dbReference>
<dbReference type="InterPro" id="IPR000965">
    <property type="entry name" value="GPR_dom"/>
</dbReference>
<dbReference type="NCBIfam" id="NF001221">
    <property type="entry name" value="PRK00197.1"/>
    <property type="match status" value="1"/>
</dbReference>
<dbReference type="NCBIfam" id="TIGR00407">
    <property type="entry name" value="proA"/>
    <property type="match status" value="1"/>
</dbReference>
<dbReference type="PANTHER" id="PTHR11063:SF8">
    <property type="entry name" value="DELTA-1-PYRROLINE-5-CARBOXYLATE SYNTHASE"/>
    <property type="match status" value="1"/>
</dbReference>
<dbReference type="PANTHER" id="PTHR11063">
    <property type="entry name" value="GLUTAMATE SEMIALDEHYDE DEHYDROGENASE"/>
    <property type="match status" value="1"/>
</dbReference>
<dbReference type="Pfam" id="PF00171">
    <property type="entry name" value="Aldedh"/>
    <property type="match status" value="1"/>
</dbReference>
<dbReference type="PIRSF" id="PIRSF000151">
    <property type="entry name" value="GPR"/>
    <property type="match status" value="1"/>
</dbReference>
<dbReference type="SUPFAM" id="SSF53720">
    <property type="entry name" value="ALDH-like"/>
    <property type="match status" value="1"/>
</dbReference>
<dbReference type="PROSITE" id="PS01223">
    <property type="entry name" value="PROA"/>
    <property type="match status" value="1"/>
</dbReference>
<protein>
    <recommendedName>
        <fullName evidence="1">Gamma-glutamyl phosphate reductase</fullName>
        <shortName evidence="1">GPR</shortName>
        <ecNumber evidence="1">1.2.1.41</ecNumber>
    </recommendedName>
    <alternativeName>
        <fullName evidence="1">Glutamate-5-semialdehyde dehydrogenase</fullName>
    </alternativeName>
    <alternativeName>
        <fullName evidence="1">Glutamyl-gamma-semialdehyde dehydrogenase</fullName>
        <shortName evidence="1">GSA dehydrogenase</shortName>
    </alternativeName>
</protein>
<name>PROA_GEOSM</name>
<proteinExistence type="inferred from homology"/>
<sequence length="418" mass="45424">MSVAEQIRTIAAEARQASFAMAKLSSAAKDQLLLDMALALINAAPHIIEENKKDLEAGQKRGLSAAMLDRLMLDEARVKGMADAIREVAQLPDPVGEVTGMWKRPNDLMVGKMRIPLGVIGIIYESRPNVTSDAAALCLKSGNAVVLRGGSEAIHSNLAIATILKAQLAKHGIPAAALSLIPFVEREGVTEMLKQEEFIDVIIPRGGESLIRFVVENSKIPVIKHYKGVCHIFVDATADFEMAREIIVNAKTQRPGVCNALETLLIHKDIAETFVPFIYEALTTLKVELRGDKTFRQFAPKAAKATEEDWYAEYLELILAAAVVDGLDAAIDHINRYSSLHTESIITGDYANSQRFIREVNSGVVMVNASTRFSDGNQLGLGAEIGISTTKLHSFGPMGLTDLTTTKFIVYGSGQVRP</sequence>